<dbReference type="EC" id="2.4.2.29" evidence="1"/>
<dbReference type="EMBL" id="AE007869">
    <property type="protein sequence ID" value="AAK87449.1"/>
    <property type="molecule type" value="Genomic_DNA"/>
</dbReference>
<dbReference type="PIR" id="AG2782">
    <property type="entry name" value="AG2782"/>
</dbReference>
<dbReference type="PIR" id="H97561">
    <property type="entry name" value="H97561"/>
</dbReference>
<dbReference type="RefSeq" id="NP_354664.1">
    <property type="nucleotide sequence ID" value="NC_003062.2"/>
</dbReference>
<dbReference type="RefSeq" id="WP_010971793.1">
    <property type="nucleotide sequence ID" value="NC_003062.2"/>
</dbReference>
<dbReference type="SMR" id="Q8UES8"/>
<dbReference type="STRING" id="176299.Atu1677"/>
<dbReference type="EnsemblBacteria" id="AAK87449">
    <property type="protein sequence ID" value="AAK87449"/>
    <property type="gene ID" value="Atu1677"/>
</dbReference>
<dbReference type="GeneID" id="1133715"/>
<dbReference type="KEGG" id="atu:Atu1677"/>
<dbReference type="PATRIC" id="fig|176299.10.peg.1694"/>
<dbReference type="eggNOG" id="COG0343">
    <property type="taxonomic scope" value="Bacteria"/>
</dbReference>
<dbReference type="HOGENOM" id="CLU_022060_0_1_5"/>
<dbReference type="OrthoDB" id="9805417at2"/>
<dbReference type="PhylomeDB" id="Q8UES8"/>
<dbReference type="BioCyc" id="AGRO:ATU1677-MONOMER"/>
<dbReference type="UniPathway" id="UPA00392"/>
<dbReference type="Proteomes" id="UP000000813">
    <property type="component" value="Chromosome circular"/>
</dbReference>
<dbReference type="GO" id="GO:0005829">
    <property type="term" value="C:cytosol"/>
    <property type="evidence" value="ECO:0007669"/>
    <property type="project" value="TreeGrafter"/>
</dbReference>
<dbReference type="GO" id="GO:0008479">
    <property type="term" value="F:tRNA-guanosine(34) queuine transglycosylase activity"/>
    <property type="evidence" value="ECO:0007669"/>
    <property type="project" value="UniProtKB-UniRule"/>
</dbReference>
<dbReference type="GO" id="GO:0008616">
    <property type="term" value="P:queuosine biosynthetic process"/>
    <property type="evidence" value="ECO:0007669"/>
    <property type="project" value="UniProtKB-UniRule"/>
</dbReference>
<dbReference type="GO" id="GO:0002099">
    <property type="term" value="P:tRNA wobble guanine modification"/>
    <property type="evidence" value="ECO:0007669"/>
    <property type="project" value="TreeGrafter"/>
</dbReference>
<dbReference type="GO" id="GO:0101030">
    <property type="term" value="P:tRNA-guanine transglycosylation"/>
    <property type="evidence" value="ECO:0007669"/>
    <property type="project" value="InterPro"/>
</dbReference>
<dbReference type="FunFam" id="3.20.20.105:FF:000001">
    <property type="entry name" value="Queuine tRNA-ribosyltransferase"/>
    <property type="match status" value="1"/>
</dbReference>
<dbReference type="Gene3D" id="3.20.20.105">
    <property type="entry name" value="Queuine tRNA-ribosyltransferase-like"/>
    <property type="match status" value="1"/>
</dbReference>
<dbReference type="HAMAP" id="MF_00168">
    <property type="entry name" value="Q_tRNA_Tgt"/>
    <property type="match status" value="1"/>
</dbReference>
<dbReference type="InterPro" id="IPR050076">
    <property type="entry name" value="ArchSynthase1/Queuine_TRR"/>
</dbReference>
<dbReference type="InterPro" id="IPR004803">
    <property type="entry name" value="TGT"/>
</dbReference>
<dbReference type="InterPro" id="IPR036511">
    <property type="entry name" value="TGT-like_sf"/>
</dbReference>
<dbReference type="InterPro" id="IPR002616">
    <property type="entry name" value="tRNA_ribo_trans-like"/>
</dbReference>
<dbReference type="NCBIfam" id="TIGR00430">
    <property type="entry name" value="Q_tRNA_tgt"/>
    <property type="match status" value="1"/>
</dbReference>
<dbReference type="NCBIfam" id="TIGR00449">
    <property type="entry name" value="tgt_general"/>
    <property type="match status" value="1"/>
</dbReference>
<dbReference type="PANTHER" id="PTHR46499">
    <property type="entry name" value="QUEUINE TRNA-RIBOSYLTRANSFERASE"/>
    <property type="match status" value="1"/>
</dbReference>
<dbReference type="PANTHER" id="PTHR46499:SF1">
    <property type="entry name" value="QUEUINE TRNA-RIBOSYLTRANSFERASE"/>
    <property type="match status" value="1"/>
</dbReference>
<dbReference type="Pfam" id="PF01702">
    <property type="entry name" value="TGT"/>
    <property type="match status" value="1"/>
</dbReference>
<dbReference type="SUPFAM" id="SSF51713">
    <property type="entry name" value="tRNA-guanine transglycosylase"/>
    <property type="match status" value="1"/>
</dbReference>
<evidence type="ECO:0000255" key="1">
    <source>
        <dbReference type="HAMAP-Rule" id="MF_00168"/>
    </source>
</evidence>
<sequence length="376" mass="41945">MHEKFTFTLKSTSGGARLGEVAMPRGVIRTPAFMPVGTVGTVKAMYLDQVRELGADIILGNTYHLMLRPGPERVARLGGLHELIRWPHPILTDSGGFQVMSLSGLRKLDEKGVTFKSHVDGSLHHMSPERSIEIQGMLDSDIQMQLDECIALPAERKEIERAMEMSLRWAERCRVAFGEQPGKAMFGIVQGGDQPDLRIRSAEGLKELDLKGYAVGGLAVGEPQDVMLGMLDITLPVLPTEKPRYLMGVGTPDDILKSVARGIDMFDCVMPTRSGRHGLAFTRRGRVNIRNARHAEDMRPLDEQSNCPASRDYSRAYLHHLTRSNEALGGMLLSWHNLAYYQELMQGIRTSIEEGRFADFYAETIEMWARGDIDPV</sequence>
<protein>
    <recommendedName>
        <fullName evidence="1">Queuine tRNA-ribosyltransferase</fullName>
        <ecNumber evidence="1">2.4.2.29</ecNumber>
    </recommendedName>
    <alternativeName>
        <fullName evidence="1">Guanine insertion enzyme</fullName>
    </alternativeName>
    <alternativeName>
        <fullName evidence="1">tRNA-guanine transglycosylase</fullName>
    </alternativeName>
</protein>
<keyword id="KW-0328">Glycosyltransferase</keyword>
<keyword id="KW-0671">Queuosine biosynthesis</keyword>
<keyword id="KW-1185">Reference proteome</keyword>
<keyword id="KW-0808">Transferase</keyword>
<keyword id="KW-0819">tRNA processing</keyword>
<organism>
    <name type="scientific">Agrobacterium fabrum (strain C58 / ATCC 33970)</name>
    <name type="common">Agrobacterium tumefaciens (strain C58)</name>
    <dbReference type="NCBI Taxonomy" id="176299"/>
    <lineage>
        <taxon>Bacteria</taxon>
        <taxon>Pseudomonadati</taxon>
        <taxon>Pseudomonadota</taxon>
        <taxon>Alphaproteobacteria</taxon>
        <taxon>Hyphomicrobiales</taxon>
        <taxon>Rhizobiaceae</taxon>
        <taxon>Rhizobium/Agrobacterium group</taxon>
        <taxon>Agrobacterium</taxon>
        <taxon>Agrobacterium tumefaciens complex</taxon>
    </lineage>
</organism>
<feature type="chain" id="PRO_0000135440" description="Queuine tRNA-ribosyltransferase">
    <location>
        <begin position="1"/>
        <end position="376"/>
    </location>
</feature>
<feature type="region of interest" description="RNA binding" evidence="1">
    <location>
        <begin position="248"/>
        <end position="254"/>
    </location>
</feature>
<feature type="region of interest" description="RNA binding; important for wobble base 34 recognition" evidence="1">
    <location>
        <begin position="272"/>
        <end position="276"/>
    </location>
</feature>
<feature type="active site" description="Proton acceptor" evidence="1">
    <location>
        <position position="93"/>
    </location>
</feature>
<feature type="active site" description="Nucleophile" evidence="1">
    <location>
        <position position="267"/>
    </location>
</feature>
<feature type="binding site" evidence="1">
    <location>
        <begin position="93"/>
        <end position="97"/>
    </location>
    <ligand>
        <name>substrate</name>
    </ligand>
</feature>
<feature type="binding site" evidence="1">
    <location>
        <position position="147"/>
    </location>
    <ligand>
        <name>substrate</name>
    </ligand>
</feature>
<feature type="binding site" evidence="1">
    <location>
        <position position="190"/>
    </location>
    <ligand>
        <name>substrate</name>
    </ligand>
</feature>
<feature type="binding site" evidence="1">
    <location>
        <position position="217"/>
    </location>
    <ligand>
        <name>substrate</name>
    </ligand>
</feature>
<name>TGT_AGRFC</name>
<comment type="function">
    <text evidence="1">Catalyzes the base-exchange of a guanine (G) residue with the queuine precursor 7-aminomethyl-7-deazaguanine (PreQ1) at position 34 (anticodon wobble position) in tRNAs with GU(N) anticodons (tRNA-Asp, -Asn, -His and -Tyr). Catalysis occurs through a double-displacement mechanism. The nucleophile active site attacks the C1' of nucleotide 34 to detach the guanine base from the RNA, forming a covalent enzyme-RNA intermediate. The proton acceptor active site deprotonates the incoming PreQ1, allowing a nucleophilic attack on the C1' of the ribose to form the product. After dissociation, two additional enzymatic reactions on the tRNA convert PreQ1 to queuine (Q), resulting in the hypermodified nucleoside queuosine (7-(((4,5-cis-dihydroxy-2-cyclopenten-1-yl)amino)methyl)-7-deazaguanosine).</text>
</comment>
<comment type="catalytic activity">
    <reaction evidence="1">
        <text>7-aminomethyl-7-carbaguanine + guanosine(34) in tRNA = 7-aminomethyl-7-carbaguanosine(34) in tRNA + guanine</text>
        <dbReference type="Rhea" id="RHEA:24104"/>
        <dbReference type="Rhea" id="RHEA-COMP:10341"/>
        <dbReference type="Rhea" id="RHEA-COMP:10342"/>
        <dbReference type="ChEBI" id="CHEBI:16235"/>
        <dbReference type="ChEBI" id="CHEBI:58703"/>
        <dbReference type="ChEBI" id="CHEBI:74269"/>
        <dbReference type="ChEBI" id="CHEBI:82833"/>
        <dbReference type="EC" id="2.4.2.29"/>
    </reaction>
</comment>
<comment type="pathway">
    <text evidence="1">tRNA modification; tRNA-queuosine biosynthesis.</text>
</comment>
<comment type="subunit">
    <text evidence="1">Homodimer. Within each dimer, one monomer is responsible for RNA recognition and catalysis, while the other monomer binds to the replacement base PreQ1.</text>
</comment>
<comment type="similarity">
    <text evidence="1">Belongs to the queuine tRNA-ribosyltransferase family.</text>
</comment>
<proteinExistence type="inferred from homology"/>
<accession>Q8UES8</accession>
<reference key="1">
    <citation type="journal article" date="2001" name="Science">
        <title>The genome of the natural genetic engineer Agrobacterium tumefaciens C58.</title>
        <authorList>
            <person name="Wood D.W."/>
            <person name="Setubal J.C."/>
            <person name="Kaul R."/>
            <person name="Monks D.E."/>
            <person name="Kitajima J.P."/>
            <person name="Okura V.K."/>
            <person name="Zhou Y."/>
            <person name="Chen L."/>
            <person name="Wood G.E."/>
            <person name="Almeida N.F. Jr."/>
            <person name="Woo L."/>
            <person name="Chen Y."/>
            <person name="Paulsen I.T."/>
            <person name="Eisen J.A."/>
            <person name="Karp P.D."/>
            <person name="Bovee D. Sr."/>
            <person name="Chapman P."/>
            <person name="Clendenning J."/>
            <person name="Deatherage G."/>
            <person name="Gillet W."/>
            <person name="Grant C."/>
            <person name="Kutyavin T."/>
            <person name="Levy R."/>
            <person name="Li M.-J."/>
            <person name="McClelland E."/>
            <person name="Palmieri A."/>
            <person name="Raymond C."/>
            <person name="Rouse G."/>
            <person name="Saenphimmachak C."/>
            <person name="Wu Z."/>
            <person name="Romero P."/>
            <person name="Gordon D."/>
            <person name="Zhang S."/>
            <person name="Yoo H."/>
            <person name="Tao Y."/>
            <person name="Biddle P."/>
            <person name="Jung M."/>
            <person name="Krespan W."/>
            <person name="Perry M."/>
            <person name="Gordon-Kamm B."/>
            <person name="Liao L."/>
            <person name="Kim S."/>
            <person name="Hendrick C."/>
            <person name="Zhao Z.-Y."/>
            <person name="Dolan M."/>
            <person name="Chumley F."/>
            <person name="Tingey S.V."/>
            <person name="Tomb J.-F."/>
            <person name="Gordon M.P."/>
            <person name="Olson M.V."/>
            <person name="Nester E.W."/>
        </authorList>
    </citation>
    <scope>NUCLEOTIDE SEQUENCE [LARGE SCALE GENOMIC DNA]</scope>
    <source>
        <strain>C58 / ATCC 33970</strain>
    </source>
</reference>
<reference key="2">
    <citation type="journal article" date="2001" name="Science">
        <title>Genome sequence of the plant pathogen and biotechnology agent Agrobacterium tumefaciens C58.</title>
        <authorList>
            <person name="Goodner B."/>
            <person name="Hinkle G."/>
            <person name="Gattung S."/>
            <person name="Miller N."/>
            <person name="Blanchard M."/>
            <person name="Qurollo B."/>
            <person name="Goldman B.S."/>
            <person name="Cao Y."/>
            <person name="Askenazi M."/>
            <person name="Halling C."/>
            <person name="Mullin L."/>
            <person name="Houmiel K."/>
            <person name="Gordon J."/>
            <person name="Vaudin M."/>
            <person name="Iartchouk O."/>
            <person name="Epp A."/>
            <person name="Liu F."/>
            <person name="Wollam C."/>
            <person name="Allinger M."/>
            <person name="Doughty D."/>
            <person name="Scott C."/>
            <person name="Lappas C."/>
            <person name="Markelz B."/>
            <person name="Flanagan C."/>
            <person name="Crowell C."/>
            <person name="Gurson J."/>
            <person name="Lomo C."/>
            <person name="Sear C."/>
            <person name="Strub G."/>
            <person name="Cielo C."/>
            <person name="Slater S."/>
        </authorList>
    </citation>
    <scope>NUCLEOTIDE SEQUENCE [LARGE SCALE GENOMIC DNA]</scope>
    <source>
        <strain>C58 / ATCC 33970</strain>
    </source>
</reference>
<gene>
    <name evidence="1" type="primary">tgt</name>
    <name type="ordered locus">Atu1677</name>
    <name type="ORF">AGR_C_3085</name>
</gene>